<evidence type="ECO:0000255" key="1">
    <source>
        <dbReference type="PROSITE-ProRule" id="PRU00042"/>
    </source>
</evidence>
<evidence type="ECO:0000255" key="2">
    <source>
        <dbReference type="PROSITE-ProRule" id="PRU00119"/>
    </source>
</evidence>
<evidence type="ECO:0000303" key="3">
    <source>
    </source>
</evidence>
<evidence type="ECO:0000303" key="4">
    <source>
    </source>
</evidence>
<evidence type="ECO:0000303" key="5">
    <source>
    </source>
</evidence>
<evidence type="ECO:0000305" key="6"/>
<evidence type="ECO:0007744" key="7">
    <source>
    </source>
</evidence>
<evidence type="ECO:0007744" key="8">
    <source>
    </source>
</evidence>
<evidence type="ECO:0007744" key="9">
    <source>
    </source>
</evidence>
<organism>
    <name type="scientific">Homo sapiens</name>
    <name type="common">Human</name>
    <dbReference type="NCBI Taxonomy" id="9606"/>
    <lineage>
        <taxon>Eukaryota</taxon>
        <taxon>Metazoa</taxon>
        <taxon>Chordata</taxon>
        <taxon>Craniata</taxon>
        <taxon>Vertebrata</taxon>
        <taxon>Euteleostomi</taxon>
        <taxon>Mammalia</taxon>
        <taxon>Eutheria</taxon>
        <taxon>Euarchontoglires</taxon>
        <taxon>Primates</taxon>
        <taxon>Haplorrhini</taxon>
        <taxon>Catarrhini</taxon>
        <taxon>Hominidae</taxon>
        <taxon>Homo</taxon>
    </lineage>
</organism>
<dbReference type="EMBL" id="AF003540">
    <property type="protein sequence ID" value="AAB86596.1"/>
    <property type="molecule type" value="mRNA"/>
</dbReference>
<dbReference type="EMBL" id="AK095720">
    <property type="protein sequence ID" value="BAG53114.1"/>
    <property type="molecule type" value="mRNA"/>
</dbReference>
<dbReference type="EMBL" id="AK131296">
    <property type="protein sequence ID" value="BAD18466.1"/>
    <property type="molecule type" value="mRNA"/>
</dbReference>
<dbReference type="EMBL" id="AK290099">
    <property type="protein sequence ID" value="BAF82788.1"/>
    <property type="molecule type" value="mRNA"/>
</dbReference>
<dbReference type="EMBL" id="AK293679">
    <property type="protein sequence ID" value="BAG57121.1"/>
    <property type="status" value="ALT_FRAME"/>
    <property type="molecule type" value="mRNA"/>
</dbReference>
<dbReference type="EMBL" id="AL833722">
    <property type="protein sequence ID" value="CAH56261.1"/>
    <property type="molecule type" value="mRNA"/>
</dbReference>
<dbReference type="EMBL" id="AC123788">
    <property type="status" value="NOT_ANNOTATED_CDS"/>
    <property type="molecule type" value="Genomic_DNA"/>
</dbReference>
<dbReference type="EMBL" id="CH471158">
    <property type="protein sequence ID" value="EAX02548.1"/>
    <property type="molecule type" value="Genomic_DNA"/>
</dbReference>
<dbReference type="EMBL" id="CH471158">
    <property type="protein sequence ID" value="EAX02549.1"/>
    <property type="molecule type" value="Genomic_DNA"/>
</dbReference>
<dbReference type="EMBL" id="BC121028">
    <property type="protein sequence ID" value="AAI21029.1"/>
    <property type="molecule type" value="mRNA"/>
</dbReference>
<dbReference type="EMBL" id="BC121029">
    <property type="protein sequence ID" value="AAI21030.1"/>
    <property type="molecule type" value="mRNA"/>
</dbReference>
<dbReference type="EMBL" id="BM462194">
    <property type="status" value="NOT_ANNOTATED_CDS"/>
    <property type="molecule type" value="mRNA"/>
</dbReference>
<dbReference type="CCDS" id="CCDS41604.1">
    <molecule id="O14628-4"/>
</dbReference>
<dbReference type="CCDS" id="CCDS44521.1">
    <molecule id="O14628-5"/>
</dbReference>
<dbReference type="CCDS" id="CCDS44522.1">
    <molecule id="O14628-1"/>
</dbReference>
<dbReference type="CCDS" id="CCDS55736.1">
    <molecule id="O14628-7"/>
</dbReference>
<dbReference type="CCDS" id="CCDS55737.1">
    <molecule id="O14628-6"/>
</dbReference>
<dbReference type="CCDS" id="CCDS58111.1">
    <molecule id="O14628-8"/>
</dbReference>
<dbReference type="RefSeq" id="NP_001123991.1">
    <molecule id="O14628-5"/>
    <property type="nucleotide sequence ID" value="NM_001130519.3"/>
</dbReference>
<dbReference type="RefSeq" id="NP_001123992.1">
    <molecule id="O14628-1"/>
    <property type="nucleotide sequence ID" value="NM_001130520.3"/>
</dbReference>
<dbReference type="RefSeq" id="NP_001229770.1">
    <molecule id="O14628-6"/>
    <property type="nucleotide sequence ID" value="NM_001242841.2"/>
</dbReference>
<dbReference type="RefSeq" id="NP_001229771.1">
    <property type="nucleotide sequence ID" value="NM_001242842.1"/>
</dbReference>
<dbReference type="RefSeq" id="NP_001229772.1">
    <molecule id="O14628-7"/>
    <property type="nucleotide sequence ID" value="NM_001242843.2"/>
</dbReference>
<dbReference type="RefSeq" id="NP_001243752.1">
    <molecule id="O14628-8"/>
    <property type="nucleotide sequence ID" value="NM_001256823.2"/>
</dbReference>
<dbReference type="RefSeq" id="NP_001243753.1">
    <property type="nucleotide sequence ID" value="NM_001256824.1"/>
</dbReference>
<dbReference type="RefSeq" id="NP_001243754.1">
    <molecule id="O14628-7"/>
    <property type="nucleotide sequence ID" value="NM_001256825.2"/>
</dbReference>
<dbReference type="RefSeq" id="NP_009083.2">
    <molecule id="O14628-4"/>
    <property type="nucleotide sequence ID" value="NM_007152.5"/>
</dbReference>
<dbReference type="RefSeq" id="XP_016873752.1">
    <property type="nucleotide sequence ID" value="XM_017018263.1"/>
</dbReference>
<dbReference type="SMR" id="O14628"/>
<dbReference type="BioGRID" id="113532">
    <property type="interactions" value="87"/>
</dbReference>
<dbReference type="FunCoup" id="O14628">
    <property type="interactions" value="340"/>
</dbReference>
<dbReference type="IntAct" id="O14628">
    <property type="interactions" value="58"/>
</dbReference>
<dbReference type="STRING" id="9606.ENSP00000382511"/>
<dbReference type="GlyGen" id="O14628">
    <property type="glycosylation" value="1 site, 1 N-linked glycan (1 site)"/>
</dbReference>
<dbReference type="iPTMnet" id="O14628"/>
<dbReference type="PhosphoSitePlus" id="O14628"/>
<dbReference type="BioMuta" id="ZNF195"/>
<dbReference type="REPRODUCTION-2DPAGE" id="O14628"/>
<dbReference type="jPOST" id="O14628"/>
<dbReference type="MassIVE" id="O14628"/>
<dbReference type="PaxDb" id="9606-ENSP00000382511"/>
<dbReference type="PeptideAtlas" id="O14628"/>
<dbReference type="ProteomicsDB" id="10773"/>
<dbReference type="ProteomicsDB" id="48126">
    <molecule id="O14628-1"/>
</dbReference>
<dbReference type="ProteomicsDB" id="48127">
    <molecule id="O14628-4"/>
</dbReference>
<dbReference type="ProteomicsDB" id="48128">
    <molecule id="O14628-5"/>
</dbReference>
<dbReference type="ProteomicsDB" id="48129">
    <molecule id="O14628-6"/>
</dbReference>
<dbReference type="ProteomicsDB" id="48130">
    <molecule id="O14628-7"/>
</dbReference>
<dbReference type="Pumba" id="O14628"/>
<dbReference type="Antibodypedia" id="5737">
    <property type="antibodies" value="133 antibodies from 24 providers"/>
</dbReference>
<dbReference type="DNASU" id="7748"/>
<dbReference type="Ensembl" id="ENST00000005082.13">
    <molecule id="O14628-5"/>
    <property type="protein sequence ID" value="ENSP00000005082.9"/>
    <property type="gene ID" value="ENSG00000005801.18"/>
</dbReference>
<dbReference type="Ensembl" id="ENST00000343338.11">
    <molecule id="O14628-7"/>
    <property type="protein sequence ID" value="ENSP00000344483.7"/>
    <property type="gene ID" value="ENSG00000005801.18"/>
</dbReference>
<dbReference type="Ensembl" id="ENST00000354599.10">
    <molecule id="O14628-4"/>
    <property type="protein sequence ID" value="ENSP00000346613.6"/>
    <property type="gene ID" value="ENSG00000005801.18"/>
</dbReference>
<dbReference type="Ensembl" id="ENST00000399602.9">
    <molecule id="O14628-1"/>
    <property type="protein sequence ID" value="ENSP00000382511.4"/>
    <property type="gene ID" value="ENSG00000005801.18"/>
</dbReference>
<dbReference type="Ensembl" id="ENST00000429541.6">
    <molecule id="O14628-7"/>
    <property type="protein sequence ID" value="ENSP00000387998.2"/>
    <property type="gene ID" value="ENSG00000005801.18"/>
</dbReference>
<dbReference type="Ensembl" id="ENST00000438262.6">
    <molecule id="O14628-8"/>
    <property type="protein sequence ID" value="ENSP00000414353.2"/>
    <property type="gene ID" value="ENSG00000005801.18"/>
</dbReference>
<dbReference type="Ensembl" id="ENST00000526601.5">
    <molecule id="O14628-6"/>
    <property type="protein sequence ID" value="ENSP00000435828.1"/>
    <property type="gene ID" value="ENSG00000005801.18"/>
</dbReference>
<dbReference type="Ensembl" id="ENST00000528218.5">
    <molecule id="O14628-8"/>
    <property type="protein sequence ID" value="ENSP00000436384.1"/>
    <property type="gene ID" value="ENSG00000005801.18"/>
</dbReference>
<dbReference type="Ensembl" id="ENST00000618467.4">
    <molecule id="O14628-8"/>
    <property type="protein sequence ID" value="ENSP00000482411.1"/>
    <property type="gene ID" value="ENSG00000005801.18"/>
</dbReference>
<dbReference type="GeneID" id="7748"/>
<dbReference type="KEGG" id="hsa:7748"/>
<dbReference type="MANE-Select" id="ENST00000399602.9">
    <property type="protein sequence ID" value="ENSP00000382511.4"/>
    <property type="RefSeq nucleotide sequence ID" value="NM_001130520.3"/>
    <property type="RefSeq protein sequence ID" value="NP_001123992.1"/>
</dbReference>
<dbReference type="UCSC" id="uc001lxs.4">
    <molecule id="O14628-1"/>
    <property type="organism name" value="human"/>
</dbReference>
<dbReference type="AGR" id="HGNC:12986"/>
<dbReference type="CTD" id="7748"/>
<dbReference type="DisGeNET" id="7748"/>
<dbReference type="GeneCards" id="ZNF195"/>
<dbReference type="HGNC" id="HGNC:12986">
    <property type="gene designation" value="ZNF195"/>
</dbReference>
<dbReference type="HPA" id="ENSG00000005801">
    <property type="expression patterns" value="Low tissue specificity"/>
</dbReference>
<dbReference type="MIM" id="602187">
    <property type="type" value="gene"/>
</dbReference>
<dbReference type="neXtProt" id="NX_O14628"/>
<dbReference type="OpenTargets" id="ENSG00000005801"/>
<dbReference type="PharmGKB" id="PA37566"/>
<dbReference type="VEuPathDB" id="HostDB:ENSG00000005801"/>
<dbReference type="eggNOG" id="KOG1721">
    <property type="taxonomic scope" value="Eukaryota"/>
</dbReference>
<dbReference type="GeneTree" id="ENSGT00940000153165"/>
<dbReference type="HOGENOM" id="CLU_002678_44_5_1"/>
<dbReference type="InParanoid" id="O14628"/>
<dbReference type="OMA" id="HATQAYL"/>
<dbReference type="OrthoDB" id="9411774at2759"/>
<dbReference type="PAN-GO" id="O14628">
    <property type="GO annotations" value="3 GO annotations based on evolutionary models"/>
</dbReference>
<dbReference type="PhylomeDB" id="O14628"/>
<dbReference type="TreeFam" id="TF342117"/>
<dbReference type="PathwayCommons" id="O14628"/>
<dbReference type="Reactome" id="R-HSA-212436">
    <property type="pathway name" value="Generic Transcription Pathway"/>
</dbReference>
<dbReference type="SignaLink" id="O14628"/>
<dbReference type="BioGRID-ORCS" id="7748">
    <property type="hits" value="9 hits in 1177 CRISPR screens"/>
</dbReference>
<dbReference type="ChiTaRS" id="ZNF195">
    <property type="organism name" value="human"/>
</dbReference>
<dbReference type="GenomeRNAi" id="7748"/>
<dbReference type="Pharos" id="O14628">
    <property type="development level" value="Tdark"/>
</dbReference>
<dbReference type="PRO" id="PR:O14628"/>
<dbReference type="Proteomes" id="UP000005640">
    <property type="component" value="Chromosome 11"/>
</dbReference>
<dbReference type="RNAct" id="O14628">
    <property type="molecule type" value="protein"/>
</dbReference>
<dbReference type="Bgee" id="ENSG00000005801">
    <property type="expression patterns" value="Expressed in buccal mucosa cell and 191 other cell types or tissues"/>
</dbReference>
<dbReference type="ExpressionAtlas" id="O14628">
    <property type="expression patterns" value="baseline and differential"/>
</dbReference>
<dbReference type="GO" id="GO:0005634">
    <property type="term" value="C:nucleus"/>
    <property type="evidence" value="ECO:0007669"/>
    <property type="project" value="UniProtKB-SubCell"/>
</dbReference>
<dbReference type="GO" id="GO:0000981">
    <property type="term" value="F:DNA-binding transcription factor activity, RNA polymerase II-specific"/>
    <property type="evidence" value="ECO:0000318"/>
    <property type="project" value="GO_Central"/>
</dbReference>
<dbReference type="GO" id="GO:0000978">
    <property type="term" value="F:RNA polymerase II cis-regulatory region sequence-specific DNA binding"/>
    <property type="evidence" value="ECO:0000318"/>
    <property type="project" value="GO_Central"/>
</dbReference>
<dbReference type="GO" id="GO:0008270">
    <property type="term" value="F:zinc ion binding"/>
    <property type="evidence" value="ECO:0000303"/>
    <property type="project" value="UniProtKB"/>
</dbReference>
<dbReference type="GO" id="GO:0006355">
    <property type="term" value="P:regulation of DNA-templated transcription"/>
    <property type="evidence" value="ECO:0000318"/>
    <property type="project" value="GO_Central"/>
</dbReference>
<dbReference type="CDD" id="cd07765">
    <property type="entry name" value="KRAB_A-box"/>
    <property type="match status" value="1"/>
</dbReference>
<dbReference type="FunFam" id="3.30.160.60:FF:001999">
    <property type="entry name" value="Zinc finger protein 195"/>
    <property type="match status" value="1"/>
</dbReference>
<dbReference type="FunFam" id="3.30.160.60:FF:000034">
    <property type="entry name" value="zinc finger protein 25"/>
    <property type="match status" value="1"/>
</dbReference>
<dbReference type="FunFam" id="3.30.160.60:FF:002343">
    <property type="entry name" value="Zinc finger protein 33A"/>
    <property type="match status" value="1"/>
</dbReference>
<dbReference type="FunFam" id="3.30.160.60:FF:000848">
    <property type="entry name" value="Zinc finger protein 35"/>
    <property type="match status" value="2"/>
</dbReference>
<dbReference type="FunFam" id="3.30.160.60:FF:000672">
    <property type="entry name" value="Zinc finger protein 430"/>
    <property type="match status" value="1"/>
</dbReference>
<dbReference type="FunFam" id="3.30.160.60:FF:002090">
    <property type="entry name" value="Zinc finger protein 473"/>
    <property type="match status" value="1"/>
</dbReference>
<dbReference type="FunFam" id="3.30.160.60:FF:001270">
    <property type="entry name" value="zinc finger protein 583 isoform X1"/>
    <property type="match status" value="1"/>
</dbReference>
<dbReference type="FunFam" id="3.30.160.60:FF:002811">
    <property type="entry name" value="Zinc finger protein 679"/>
    <property type="match status" value="1"/>
</dbReference>
<dbReference type="Gene3D" id="6.10.140.140">
    <property type="match status" value="1"/>
</dbReference>
<dbReference type="Gene3D" id="3.30.160.60">
    <property type="entry name" value="Classic Zinc Finger"/>
    <property type="match status" value="11"/>
</dbReference>
<dbReference type="InterPro" id="IPR001909">
    <property type="entry name" value="KRAB"/>
</dbReference>
<dbReference type="InterPro" id="IPR036051">
    <property type="entry name" value="KRAB_dom_sf"/>
</dbReference>
<dbReference type="InterPro" id="IPR036236">
    <property type="entry name" value="Znf_C2H2_sf"/>
</dbReference>
<dbReference type="InterPro" id="IPR013087">
    <property type="entry name" value="Znf_C2H2_type"/>
</dbReference>
<dbReference type="PANTHER" id="PTHR24399:SF54">
    <property type="entry name" value="GASTRULA ZINC FINGER PROTEIN XLCGF26.1-LIKE-RELATED"/>
    <property type="match status" value="1"/>
</dbReference>
<dbReference type="PANTHER" id="PTHR24399">
    <property type="entry name" value="ZINC FINGER AND BTB DOMAIN-CONTAINING"/>
    <property type="match status" value="1"/>
</dbReference>
<dbReference type="Pfam" id="PF01352">
    <property type="entry name" value="KRAB"/>
    <property type="match status" value="1"/>
</dbReference>
<dbReference type="Pfam" id="PF00096">
    <property type="entry name" value="zf-C2H2"/>
    <property type="match status" value="7"/>
</dbReference>
<dbReference type="Pfam" id="PF13912">
    <property type="entry name" value="zf-C2H2_6"/>
    <property type="match status" value="1"/>
</dbReference>
<dbReference type="PRINTS" id="PR02045">
    <property type="entry name" value="F138DOMAIN"/>
</dbReference>
<dbReference type="SMART" id="SM00349">
    <property type="entry name" value="KRAB"/>
    <property type="match status" value="1"/>
</dbReference>
<dbReference type="SMART" id="SM00355">
    <property type="entry name" value="ZnF_C2H2"/>
    <property type="match status" value="9"/>
</dbReference>
<dbReference type="SUPFAM" id="SSF57667">
    <property type="entry name" value="beta-beta-alpha zinc fingers"/>
    <property type="match status" value="8"/>
</dbReference>
<dbReference type="SUPFAM" id="SSF109640">
    <property type="entry name" value="KRAB domain (Kruppel-associated box)"/>
    <property type="match status" value="1"/>
</dbReference>
<dbReference type="PROSITE" id="PS50805">
    <property type="entry name" value="KRAB"/>
    <property type="match status" value="1"/>
</dbReference>
<dbReference type="PROSITE" id="PS00028">
    <property type="entry name" value="ZINC_FINGER_C2H2_1"/>
    <property type="match status" value="9"/>
</dbReference>
<dbReference type="PROSITE" id="PS50157">
    <property type="entry name" value="ZINC_FINGER_C2H2_2"/>
    <property type="match status" value="10"/>
</dbReference>
<gene>
    <name type="primary">ZNF195</name>
    <name type="synonym">ZNFP104</name>
</gene>
<accession>O14628</accession>
<accession>A8K234</accession>
<accession>B3KTK2</accession>
<accession>B4DEL0</accession>
<accession>C9JLY9</accession>
<accession>L7MNK2</accession>
<accession>Q0VAJ6</accession>
<accession>Q658N8</accession>
<accession>Q6ZNA9</accession>
<sequence>MTLLTFRDVAIEFSLEEWKCLDLAQQNLYRDVMLENYRNLFSVGLTVCKPGLITCLEQRKEPWNVKRQEAADGHPEMGFHHATQACLELLGSSDLPASASQSAGITGVNHRAQPGLNVSVDKFTALCSPGVLQTVKWFLEFRCIFSLAMSSHFTQDLLPEQGIQDAFPKRILRGYGNCGLDNLYLRKDWESLDECKLQKDYNGLNQCSSTTHSKIFQYNKYVKIFDNFSNLHRRNISNTGEKPFKCQECGKSFQMLSFLTEHQKIHTGKKFQKCGECGKTFIQCSHFTEPENIDTGEKPYKCQECNNVIKTCSVLTKNRIYAGGEHYRCEEFGKVFNQCSHLTEHEHGTEEKPCKYEECSSVFISCSSLSNQQMILAGEKLSKCETWYKGFNHSPNPSKHQRNEIGGKPFKCEECDSIFKWFSDLTKHKRIHTGEKPYKCDECGKAYTQSSHLSEHRRIHTGEKPYQCEECGKVFRTCSSLSNHKRTHSEEKPYTCEECGNIFKQLSDLTKHKKTHTGEKPYKCDECGKNFTQSSNLIVHKRIHTGEKPYKCEECGRVFMWFSDITKHKKTHTGEKPYKCDECGKNFTQSSNLIVHKRIHTGEKPYKCEKCGKAFTQFSHLTVHESIHT</sequence>
<protein>
    <recommendedName>
        <fullName>Zinc finger protein 195</fullName>
    </recommendedName>
</protein>
<keyword id="KW-0007">Acetylation</keyword>
<keyword id="KW-0025">Alternative splicing</keyword>
<keyword id="KW-0238">DNA-binding</keyword>
<keyword id="KW-1017">Isopeptide bond</keyword>
<keyword id="KW-0479">Metal-binding</keyword>
<keyword id="KW-0539">Nucleus</keyword>
<keyword id="KW-1267">Proteomics identification</keyword>
<keyword id="KW-1185">Reference proteome</keyword>
<keyword id="KW-0677">Repeat</keyword>
<keyword id="KW-0804">Transcription</keyword>
<keyword id="KW-0805">Transcription regulation</keyword>
<keyword id="KW-0832">Ubl conjugation</keyword>
<keyword id="KW-0862">Zinc</keyword>
<keyword id="KW-0863">Zinc-finger</keyword>
<reference key="1">
    <citation type="journal article" date="1997" name="Genomics">
        <title>Characterization of a KRAB family zinc finger gene, ZNF195, mapping to chromosome band 11p15.5.</title>
        <authorList>
            <person name="Hussey D.J."/>
            <person name="Parker N.J."/>
            <person name="Hussey N.D."/>
            <person name="Little P.F.R."/>
            <person name="Dobrovic A."/>
        </authorList>
    </citation>
    <scope>NUCLEOTIDE SEQUENCE [MRNA] (ISOFORM 1)</scope>
    <scope>ALTERNATIVE SPLICING</scope>
</reference>
<reference key="2">
    <citation type="journal article" date="2004" name="Nat. Genet.">
        <title>Complete sequencing and characterization of 21,243 full-length human cDNAs.</title>
        <authorList>
            <person name="Ota T."/>
            <person name="Suzuki Y."/>
            <person name="Nishikawa T."/>
            <person name="Otsuki T."/>
            <person name="Sugiyama T."/>
            <person name="Irie R."/>
            <person name="Wakamatsu A."/>
            <person name="Hayashi K."/>
            <person name="Sato H."/>
            <person name="Nagai K."/>
            <person name="Kimura K."/>
            <person name="Makita H."/>
            <person name="Sekine M."/>
            <person name="Obayashi M."/>
            <person name="Nishi T."/>
            <person name="Shibahara T."/>
            <person name="Tanaka T."/>
            <person name="Ishii S."/>
            <person name="Yamamoto J."/>
            <person name="Saito K."/>
            <person name="Kawai Y."/>
            <person name="Isono Y."/>
            <person name="Nakamura Y."/>
            <person name="Nagahari K."/>
            <person name="Murakami K."/>
            <person name="Yasuda T."/>
            <person name="Iwayanagi T."/>
            <person name="Wagatsuma M."/>
            <person name="Shiratori A."/>
            <person name="Sudo H."/>
            <person name="Hosoiri T."/>
            <person name="Kaku Y."/>
            <person name="Kodaira H."/>
            <person name="Kondo H."/>
            <person name="Sugawara M."/>
            <person name="Takahashi M."/>
            <person name="Kanda K."/>
            <person name="Yokoi T."/>
            <person name="Furuya T."/>
            <person name="Kikkawa E."/>
            <person name="Omura Y."/>
            <person name="Abe K."/>
            <person name="Kamihara K."/>
            <person name="Katsuta N."/>
            <person name="Sato K."/>
            <person name="Tanikawa M."/>
            <person name="Yamazaki M."/>
            <person name="Ninomiya K."/>
            <person name="Ishibashi T."/>
            <person name="Yamashita H."/>
            <person name="Murakawa K."/>
            <person name="Fujimori K."/>
            <person name="Tanai H."/>
            <person name="Kimata M."/>
            <person name="Watanabe M."/>
            <person name="Hiraoka S."/>
            <person name="Chiba Y."/>
            <person name="Ishida S."/>
            <person name="Ono Y."/>
            <person name="Takiguchi S."/>
            <person name="Watanabe S."/>
            <person name="Yosida M."/>
            <person name="Hotuta T."/>
            <person name="Kusano J."/>
            <person name="Kanehori K."/>
            <person name="Takahashi-Fujii A."/>
            <person name="Hara H."/>
            <person name="Tanase T.-O."/>
            <person name="Nomura Y."/>
            <person name="Togiya S."/>
            <person name="Komai F."/>
            <person name="Hara R."/>
            <person name="Takeuchi K."/>
            <person name="Arita M."/>
            <person name="Imose N."/>
            <person name="Musashino K."/>
            <person name="Yuuki H."/>
            <person name="Oshima A."/>
            <person name="Sasaki N."/>
            <person name="Aotsuka S."/>
            <person name="Yoshikawa Y."/>
            <person name="Matsunawa H."/>
            <person name="Ichihara T."/>
            <person name="Shiohata N."/>
            <person name="Sano S."/>
            <person name="Moriya S."/>
            <person name="Momiyama H."/>
            <person name="Satoh N."/>
            <person name="Takami S."/>
            <person name="Terashima Y."/>
            <person name="Suzuki O."/>
            <person name="Nakagawa S."/>
            <person name="Senoh A."/>
            <person name="Mizoguchi H."/>
            <person name="Goto Y."/>
            <person name="Shimizu F."/>
            <person name="Wakebe H."/>
            <person name="Hishigaki H."/>
            <person name="Watanabe T."/>
            <person name="Sugiyama A."/>
            <person name="Takemoto M."/>
            <person name="Kawakami B."/>
            <person name="Yamazaki M."/>
            <person name="Watanabe K."/>
            <person name="Kumagai A."/>
            <person name="Itakura S."/>
            <person name="Fukuzumi Y."/>
            <person name="Fujimori Y."/>
            <person name="Komiyama M."/>
            <person name="Tashiro H."/>
            <person name="Tanigami A."/>
            <person name="Fujiwara T."/>
            <person name="Ono T."/>
            <person name="Yamada K."/>
            <person name="Fujii Y."/>
            <person name="Ozaki K."/>
            <person name="Hirao M."/>
            <person name="Ohmori Y."/>
            <person name="Kawabata A."/>
            <person name="Hikiji T."/>
            <person name="Kobatake N."/>
            <person name="Inagaki H."/>
            <person name="Ikema Y."/>
            <person name="Okamoto S."/>
            <person name="Okitani R."/>
            <person name="Kawakami T."/>
            <person name="Noguchi S."/>
            <person name="Itoh T."/>
            <person name="Shigeta K."/>
            <person name="Senba T."/>
            <person name="Matsumura K."/>
            <person name="Nakajima Y."/>
            <person name="Mizuno T."/>
            <person name="Morinaga M."/>
            <person name="Sasaki M."/>
            <person name="Togashi T."/>
            <person name="Oyama M."/>
            <person name="Hata H."/>
            <person name="Watanabe M."/>
            <person name="Komatsu T."/>
            <person name="Mizushima-Sugano J."/>
            <person name="Satoh T."/>
            <person name="Shirai Y."/>
            <person name="Takahashi Y."/>
            <person name="Nakagawa K."/>
            <person name="Okumura K."/>
            <person name="Nagase T."/>
            <person name="Nomura N."/>
            <person name="Kikuchi H."/>
            <person name="Masuho Y."/>
            <person name="Yamashita R."/>
            <person name="Nakai K."/>
            <person name="Yada T."/>
            <person name="Nakamura Y."/>
            <person name="Ohara O."/>
            <person name="Isogai T."/>
            <person name="Sugano S."/>
        </authorList>
    </citation>
    <scope>NUCLEOTIDE SEQUENCE [LARGE SCALE MRNA] (ISOFORMS 1; 4; 6 AND 7)</scope>
    <source>
        <tissue>Brain</tissue>
        <tissue>Cerebellum</tissue>
        <tissue>Subthalamic nucleus</tissue>
    </source>
</reference>
<reference key="3">
    <citation type="journal article" date="2007" name="BMC Genomics">
        <title>The full-ORF clone resource of the German cDNA consortium.</title>
        <authorList>
            <person name="Bechtel S."/>
            <person name="Rosenfelder H."/>
            <person name="Duda A."/>
            <person name="Schmidt C.P."/>
            <person name="Ernst U."/>
            <person name="Wellenreuther R."/>
            <person name="Mehrle A."/>
            <person name="Schuster C."/>
            <person name="Bahr A."/>
            <person name="Bloecker H."/>
            <person name="Heubner D."/>
            <person name="Hoerlein A."/>
            <person name="Michel G."/>
            <person name="Wedler H."/>
            <person name="Koehrer K."/>
            <person name="Ottenwaelder B."/>
            <person name="Poustka A."/>
            <person name="Wiemann S."/>
            <person name="Schupp I."/>
        </authorList>
    </citation>
    <scope>NUCLEOTIDE SEQUENCE [LARGE SCALE MRNA] (ISOFORM 4)</scope>
    <source>
        <tissue>Stomach</tissue>
    </source>
</reference>
<reference key="4">
    <citation type="journal article" date="2006" name="Nature">
        <title>Human chromosome 11 DNA sequence and analysis including novel gene identification.</title>
        <authorList>
            <person name="Taylor T.D."/>
            <person name="Noguchi H."/>
            <person name="Totoki Y."/>
            <person name="Toyoda A."/>
            <person name="Kuroki Y."/>
            <person name="Dewar K."/>
            <person name="Lloyd C."/>
            <person name="Itoh T."/>
            <person name="Takeda T."/>
            <person name="Kim D.-W."/>
            <person name="She X."/>
            <person name="Barlow K.F."/>
            <person name="Bloom T."/>
            <person name="Bruford E."/>
            <person name="Chang J.L."/>
            <person name="Cuomo C.A."/>
            <person name="Eichler E."/>
            <person name="FitzGerald M.G."/>
            <person name="Jaffe D.B."/>
            <person name="LaButti K."/>
            <person name="Nicol R."/>
            <person name="Park H.-S."/>
            <person name="Seaman C."/>
            <person name="Sougnez C."/>
            <person name="Yang X."/>
            <person name="Zimmer A.R."/>
            <person name="Zody M.C."/>
            <person name="Birren B.W."/>
            <person name="Nusbaum C."/>
            <person name="Fujiyama A."/>
            <person name="Hattori M."/>
            <person name="Rogers J."/>
            <person name="Lander E.S."/>
            <person name="Sakaki Y."/>
        </authorList>
    </citation>
    <scope>NUCLEOTIDE SEQUENCE [LARGE SCALE GENOMIC DNA]</scope>
</reference>
<reference key="5">
    <citation type="submission" date="2005-07" db="EMBL/GenBank/DDBJ databases">
        <authorList>
            <person name="Mural R.J."/>
            <person name="Istrail S."/>
            <person name="Sutton G.G."/>
            <person name="Florea L."/>
            <person name="Halpern A.L."/>
            <person name="Mobarry C.M."/>
            <person name="Lippert R."/>
            <person name="Walenz B."/>
            <person name="Shatkay H."/>
            <person name="Dew I."/>
            <person name="Miller J.R."/>
            <person name="Flanigan M.J."/>
            <person name="Edwards N.J."/>
            <person name="Bolanos R."/>
            <person name="Fasulo D."/>
            <person name="Halldorsson B.V."/>
            <person name="Hannenhalli S."/>
            <person name="Turner R."/>
            <person name="Yooseph S."/>
            <person name="Lu F."/>
            <person name="Nusskern D.R."/>
            <person name="Shue B.C."/>
            <person name="Zheng X.H."/>
            <person name="Zhong F."/>
            <person name="Delcher A.L."/>
            <person name="Huson D.H."/>
            <person name="Kravitz S.A."/>
            <person name="Mouchard L."/>
            <person name="Reinert K."/>
            <person name="Remington K.A."/>
            <person name="Clark A.G."/>
            <person name="Waterman M.S."/>
            <person name="Eichler E.E."/>
            <person name="Adams M.D."/>
            <person name="Hunkapiller M.W."/>
            <person name="Myers E.W."/>
            <person name="Venter J.C."/>
        </authorList>
    </citation>
    <scope>NUCLEOTIDE SEQUENCE [LARGE SCALE GENOMIC DNA]</scope>
</reference>
<reference key="6">
    <citation type="journal article" date="2004" name="Genome Res.">
        <title>The status, quality, and expansion of the NIH full-length cDNA project: the Mammalian Gene Collection (MGC).</title>
        <authorList>
            <consortium name="The MGC Project Team"/>
        </authorList>
    </citation>
    <scope>NUCLEOTIDE SEQUENCE [LARGE SCALE MRNA] (ISOFORMS 4; 5 AND 8)</scope>
    <source>
        <tissue>Retinoblastoma</tissue>
    </source>
</reference>
<reference key="7">
    <citation type="journal article" date="2009" name="Science">
        <title>Lysine acetylation targets protein complexes and co-regulates major cellular functions.</title>
        <authorList>
            <person name="Choudhary C."/>
            <person name="Kumar C."/>
            <person name="Gnad F."/>
            <person name="Nielsen M.L."/>
            <person name="Rehman M."/>
            <person name="Walther T.C."/>
            <person name="Olsen J.V."/>
            <person name="Mann M."/>
        </authorList>
    </citation>
    <scope>ACETYLATION [LARGE SCALE ANALYSIS] AT LYS-408</scope>
    <scope>IDENTIFICATION BY MASS SPECTROMETRY [LARGE SCALE ANALYSIS]</scope>
</reference>
<reference key="8">
    <citation type="journal article" date="2014" name="Nat. Struct. Mol. Biol.">
        <title>Uncovering global SUMOylation signaling networks in a site-specific manner.</title>
        <authorList>
            <person name="Hendriks I.A."/>
            <person name="D'Souza R.C."/>
            <person name="Yang B."/>
            <person name="Verlaan-de Vries M."/>
            <person name="Mann M."/>
            <person name="Vertegaal A.C."/>
        </authorList>
    </citation>
    <scope>SUMOYLATION [LARGE SCALE ANALYSIS] AT LYS-383 AND LYS-492</scope>
    <scope>IDENTIFICATION BY MASS SPECTROMETRY [LARGE SCALE ANALYSIS]</scope>
</reference>
<reference key="9">
    <citation type="journal article" date="2017" name="Nat. Struct. Mol. Biol.">
        <title>Site-specific mapping of the human SUMO proteome reveals co-modification with phosphorylation.</title>
        <authorList>
            <person name="Hendriks I.A."/>
            <person name="Lyon D."/>
            <person name="Young C."/>
            <person name="Jensen L.J."/>
            <person name="Vertegaal A.C."/>
            <person name="Nielsen M.L."/>
        </authorList>
    </citation>
    <scope>SUMOYLATION [LARGE SCALE ANALYSIS] AT LYS-492</scope>
    <scope>IDENTIFICATION BY MASS SPECTROMETRY [LARGE SCALE ANALYSIS]</scope>
</reference>
<feature type="chain" id="PRO_0000047447" description="Zinc finger protein 195">
    <location>
        <begin position="1"/>
        <end position="629"/>
    </location>
</feature>
<feature type="domain" description="KRAB" evidence="2">
    <location>
        <begin position="4"/>
        <end position="75"/>
    </location>
</feature>
<feature type="zinc finger region" description="C2H2-type 1" evidence="1">
    <location>
        <begin position="244"/>
        <end position="266"/>
    </location>
</feature>
<feature type="zinc finger region" description="C2H2-type 2; degenerate" evidence="1">
    <location>
        <begin position="272"/>
        <end position="294"/>
    </location>
</feature>
<feature type="zinc finger region" description="C2H2-type 3" evidence="1">
    <location>
        <begin position="410"/>
        <end position="432"/>
    </location>
</feature>
<feature type="zinc finger region" description="C2H2-type 4" evidence="1">
    <location>
        <begin position="438"/>
        <end position="460"/>
    </location>
</feature>
<feature type="zinc finger region" description="C2H2-type 5" evidence="1">
    <location>
        <begin position="466"/>
        <end position="488"/>
    </location>
</feature>
<feature type="zinc finger region" description="C2H2-type 6" evidence="1">
    <location>
        <begin position="494"/>
        <end position="516"/>
    </location>
</feature>
<feature type="zinc finger region" description="C2H2-type 7" evidence="1">
    <location>
        <begin position="522"/>
        <end position="544"/>
    </location>
</feature>
<feature type="zinc finger region" description="C2H2-type 8" evidence="1">
    <location>
        <begin position="550"/>
        <end position="572"/>
    </location>
</feature>
<feature type="zinc finger region" description="C2H2-type 9" evidence="1">
    <location>
        <begin position="578"/>
        <end position="600"/>
    </location>
</feature>
<feature type="zinc finger region" description="C2H2-type 10" evidence="1">
    <location>
        <begin position="606"/>
        <end position="628"/>
    </location>
</feature>
<feature type="region of interest" description="Spacer">
    <location>
        <begin position="76"/>
        <end position="243"/>
    </location>
</feature>
<feature type="modified residue" description="N6-acetyllysine" evidence="7">
    <location>
        <position position="408"/>
    </location>
</feature>
<feature type="cross-link" description="Glycyl lysine isopeptide (Lys-Gly) (interchain with G-Cter in SUMO2)" evidence="8">
    <location>
        <position position="383"/>
    </location>
</feature>
<feature type="cross-link" description="Glycyl lysine isopeptide (Lys-Gly) (interchain with G-Cter in SUMO2)" evidence="8 9">
    <location>
        <position position="492"/>
    </location>
</feature>
<feature type="splice variant" id="VSP_036879" description="In isoform 6, isoform 7 and isoform 8." evidence="3 4">
    <original>M</original>
    <variation>MAGAQ</variation>
    <location>
        <position position="1"/>
    </location>
</feature>
<feature type="splice variant" id="VSP_036880" description="In isoform 4 and isoform 7." evidence="3 4 5">
    <location>
        <begin position="76"/>
        <end position="147"/>
    </location>
</feature>
<feature type="splice variant" id="VSP_045071" description="In isoform 8." evidence="4">
    <original>EMGFHHATQAC</original>
    <variation>GIFFVVTMEII</variation>
    <location>
        <begin position="76"/>
        <end position="86"/>
    </location>
</feature>
<feature type="splice variant" id="VSP_045072" description="In isoform 8." evidence="4">
    <location>
        <begin position="87"/>
        <end position="629"/>
    </location>
</feature>
<feature type="splice variant" id="VSP_036881" description="In isoform 5 and isoform 6." evidence="3 4">
    <location>
        <begin position="125"/>
        <end position="147"/>
    </location>
</feature>
<feature type="sequence conflict" description="In Ref. 2; BAG53114." evidence="6" ref="2">
    <original>P</original>
    <variation>R</variation>
    <location>
        <position position="290"/>
    </location>
</feature>
<feature type="sequence conflict" description="In Ref. 2; BAD18466." evidence="6" ref="2">
    <location>
        <begin position="352"/>
        <end position="407"/>
    </location>
</feature>
<feature type="sequence conflict" description="In Ref. 1; AAB86596." evidence="6" ref="1">
    <original>V</original>
    <variation>A</variation>
    <location>
        <position position="558"/>
    </location>
</feature>
<feature type="sequence conflict" description="In Ref. 1; AAB86596." evidence="6" ref="1">
    <original>K</original>
    <variation>Q</variation>
    <location>
        <position position="570"/>
    </location>
</feature>
<name>ZN195_HUMAN</name>
<proteinExistence type="evidence at protein level"/>
<comment type="function">
    <text>May be involved in transcriptional regulation.</text>
</comment>
<comment type="subcellular location">
    <subcellularLocation>
        <location evidence="6">Nucleus</location>
    </subcellularLocation>
</comment>
<comment type="alternative products">
    <event type="alternative splicing"/>
    <isoform>
        <id>O14628-1</id>
        <name>1</name>
        <name>A</name>
        <sequence type="displayed"/>
    </isoform>
    <isoform>
        <id>O14628-2</id>
        <name>2</name>
        <name>B</name>
        <sequence type="not described"/>
    </isoform>
    <isoform>
        <id>O14628-3</id>
        <name>3</name>
        <name>C</name>
        <sequence type="not described"/>
    </isoform>
    <isoform>
        <id>O14628-4</id>
        <name>4</name>
        <sequence type="described" ref="VSP_036880"/>
    </isoform>
    <isoform>
        <id>O14628-5</id>
        <name>5</name>
        <sequence type="described" ref="VSP_036881"/>
    </isoform>
    <isoform>
        <id>O14628-6</id>
        <name>6</name>
        <sequence type="described" ref="VSP_036879 VSP_036881"/>
    </isoform>
    <isoform>
        <id>O14628-7</id>
        <name>7</name>
        <sequence type="described" ref="VSP_036879 VSP_036880"/>
    </isoform>
    <isoform>
        <id>O14628-8</id>
        <name>8</name>
        <sequence type="described" ref="VSP_036879 VSP_045071 VSP_045072"/>
    </isoform>
</comment>
<comment type="tissue specificity">
    <text>Expressed in adult heart, brain, placenta, skeletal muscle and pancreas, and in fetal lung, kidney and brain. There is little expression in adult lung, liver and kidney.</text>
</comment>
<comment type="similarity">
    <text evidence="6">Belongs to the krueppel C2H2-type zinc-finger protein family.</text>
</comment>
<comment type="sequence caution" evidence="6">
    <conflict type="frameshift">
        <sequence resource="EMBL-CDS" id="BAG57121"/>
    </conflict>
</comment>